<protein>
    <recommendedName>
        <fullName evidence="1">Trigger factor</fullName>
        <shortName evidence="1">TF</shortName>
        <ecNumber evidence="1">5.2.1.8</ecNumber>
    </recommendedName>
    <alternativeName>
        <fullName evidence="1">PPIase</fullName>
    </alternativeName>
</protein>
<evidence type="ECO:0000255" key="1">
    <source>
        <dbReference type="HAMAP-Rule" id="MF_00303"/>
    </source>
</evidence>
<proteinExistence type="inferred from homology"/>
<dbReference type="EC" id="5.2.1.8" evidence="1"/>
<dbReference type="EMBL" id="CP000964">
    <property type="protein sequence ID" value="ACI06561.1"/>
    <property type="molecule type" value="Genomic_DNA"/>
</dbReference>
<dbReference type="SMR" id="B5Y0U3"/>
<dbReference type="KEGG" id="kpe:KPK_4284"/>
<dbReference type="HOGENOM" id="CLU_033058_2_0_6"/>
<dbReference type="Proteomes" id="UP000001734">
    <property type="component" value="Chromosome"/>
</dbReference>
<dbReference type="GO" id="GO:0005737">
    <property type="term" value="C:cytoplasm"/>
    <property type="evidence" value="ECO:0007669"/>
    <property type="project" value="UniProtKB-SubCell"/>
</dbReference>
<dbReference type="GO" id="GO:0003755">
    <property type="term" value="F:peptidyl-prolyl cis-trans isomerase activity"/>
    <property type="evidence" value="ECO:0007669"/>
    <property type="project" value="UniProtKB-UniRule"/>
</dbReference>
<dbReference type="GO" id="GO:0044183">
    <property type="term" value="F:protein folding chaperone"/>
    <property type="evidence" value="ECO:0007669"/>
    <property type="project" value="TreeGrafter"/>
</dbReference>
<dbReference type="GO" id="GO:0043022">
    <property type="term" value="F:ribosome binding"/>
    <property type="evidence" value="ECO:0007669"/>
    <property type="project" value="TreeGrafter"/>
</dbReference>
<dbReference type="GO" id="GO:0051083">
    <property type="term" value="P:'de novo' cotranslational protein folding"/>
    <property type="evidence" value="ECO:0007669"/>
    <property type="project" value="TreeGrafter"/>
</dbReference>
<dbReference type="GO" id="GO:0051301">
    <property type="term" value="P:cell division"/>
    <property type="evidence" value="ECO:0007669"/>
    <property type="project" value="UniProtKB-KW"/>
</dbReference>
<dbReference type="GO" id="GO:0061077">
    <property type="term" value="P:chaperone-mediated protein folding"/>
    <property type="evidence" value="ECO:0007669"/>
    <property type="project" value="TreeGrafter"/>
</dbReference>
<dbReference type="GO" id="GO:0015031">
    <property type="term" value="P:protein transport"/>
    <property type="evidence" value="ECO:0007669"/>
    <property type="project" value="UniProtKB-UniRule"/>
</dbReference>
<dbReference type="GO" id="GO:0043335">
    <property type="term" value="P:protein unfolding"/>
    <property type="evidence" value="ECO:0007669"/>
    <property type="project" value="TreeGrafter"/>
</dbReference>
<dbReference type="FunFam" id="1.10.3120.10:FF:000001">
    <property type="entry name" value="Trigger factor"/>
    <property type="match status" value="1"/>
</dbReference>
<dbReference type="FunFam" id="3.10.50.40:FF:000001">
    <property type="entry name" value="Trigger factor"/>
    <property type="match status" value="1"/>
</dbReference>
<dbReference type="FunFam" id="3.30.70.1050:FF:000001">
    <property type="entry name" value="Trigger factor"/>
    <property type="match status" value="1"/>
</dbReference>
<dbReference type="Gene3D" id="3.10.50.40">
    <property type="match status" value="1"/>
</dbReference>
<dbReference type="Gene3D" id="3.30.70.1050">
    <property type="entry name" value="Trigger factor ribosome-binding domain"/>
    <property type="match status" value="1"/>
</dbReference>
<dbReference type="Gene3D" id="1.10.3120.10">
    <property type="entry name" value="Trigger factor, C-terminal domain"/>
    <property type="match status" value="1"/>
</dbReference>
<dbReference type="HAMAP" id="MF_00303">
    <property type="entry name" value="Trigger_factor_Tig"/>
    <property type="match status" value="1"/>
</dbReference>
<dbReference type="InterPro" id="IPR046357">
    <property type="entry name" value="PPIase_dom_sf"/>
</dbReference>
<dbReference type="InterPro" id="IPR001179">
    <property type="entry name" value="PPIase_FKBP_dom"/>
</dbReference>
<dbReference type="InterPro" id="IPR005215">
    <property type="entry name" value="Trig_fac"/>
</dbReference>
<dbReference type="InterPro" id="IPR008880">
    <property type="entry name" value="Trigger_fac_C"/>
</dbReference>
<dbReference type="InterPro" id="IPR037041">
    <property type="entry name" value="Trigger_fac_C_sf"/>
</dbReference>
<dbReference type="InterPro" id="IPR008881">
    <property type="entry name" value="Trigger_fac_ribosome-bd_bac"/>
</dbReference>
<dbReference type="InterPro" id="IPR036611">
    <property type="entry name" value="Trigger_fac_ribosome-bd_sf"/>
</dbReference>
<dbReference type="InterPro" id="IPR027304">
    <property type="entry name" value="Trigger_fact/SurA_dom_sf"/>
</dbReference>
<dbReference type="NCBIfam" id="TIGR00115">
    <property type="entry name" value="tig"/>
    <property type="match status" value="1"/>
</dbReference>
<dbReference type="PANTHER" id="PTHR30560">
    <property type="entry name" value="TRIGGER FACTOR CHAPERONE AND PEPTIDYL-PROLYL CIS/TRANS ISOMERASE"/>
    <property type="match status" value="1"/>
</dbReference>
<dbReference type="PANTHER" id="PTHR30560:SF3">
    <property type="entry name" value="TRIGGER FACTOR-LIKE PROTEIN TIG, CHLOROPLASTIC"/>
    <property type="match status" value="1"/>
</dbReference>
<dbReference type="Pfam" id="PF00254">
    <property type="entry name" value="FKBP_C"/>
    <property type="match status" value="1"/>
</dbReference>
<dbReference type="Pfam" id="PF05698">
    <property type="entry name" value="Trigger_C"/>
    <property type="match status" value="1"/>
</dbReference>
<dbReference type="Pfam" id="PF05697">
    <property type="entry name" value="Trigger_N"/>
    <property type="match status" value="1"/>
</dbReference>
<dbReference type="PIRSF" id="PIRSF003095">
    <property type="entry name" value="Trigger_factor"/>
    <property type="match status" value="1"/>
</dbReference>
<dbReference type="SUPFAM" id="SSF54534">
    <property type="entry name" value="FKBP-like"/>
    <property type="match status" value="1"/>
</dbReference>
<dbReference type="SUPFAM" id="SSF109998">
    <property type="entry name" value="Triger factor/SurA peptide-binding domain-like"/>
    <property type="match status" value="1"/>
</dbReference>
<dbReference type="SUPFAM" id="SSF102735">
    <property type="entry name" value="Trigger factor ribosome-binding domain"/>
    <property type="match status" value="1"/>
</dbReference>
<dbReference type="PROSITE" id="PS50059">
    <property type="entry name" value="FKBP_PPIASE"/>
    <property type="match status" value="1"/>
</dbReference>
<gene>
    <name evidence="1" type="primary">tig</name>
    <name type="ordered locus">KPK_4284</name>
</gene>
<accession>B5Y0U3</accession>
<reference key="1">
    <citation type="journal article" date="2008" name="PLoS Genet.">
        <title>Complete genome sequence of the N2-fixing broad host range endophyte Klebsiella pneumoniae 342 and virulence predictions verified in mice.</title>
        <authorList>
            <person name="Fouts D.E."/>
            <person name="Tyler H.L."/>
            <person name="DeBoy R.T."/>
            <person name="Daugherty S."/>
            <person name="Ren Q."/>
            <person name="Badger J.H."/>
            <person name="Durkin A.S."/>
            <person name="Huot H."/>
            <person name="Shrivastava S."/>
            <person name="Kothari S."/>
            <person name="Dodson R.J."/>
            <person name="Mohamoud Y."/>
            <person name="Khouri H."/>
            <person name="Roesch L.F.W."/>
            <person name="Krogfelt K.A."/>
            <person name="Struve C."/>
            <person name="Triplett E.W."/>
            <person name="Methe B.A."/>
        </authorList>
    </citation>
    <scope>NUCLEOTIDE SEQUENCE [LARGE SCALE GENOMIC DNA]</scope>
    <source>
        <strain>342</strain>
    </source>
</reference>
<organism>
    <name type="scientific">Klebsiella pneumoniae (strain 342)</name>
    <dbReference type="NCBI Taxonomy" id="507522"/>
    <lineage>
        <taxon>Bacteria</taxon>
        <taxon>Pseudomonadati</taxon>
        <taxon>Pseudomonadota</taxon>
        <taxon>Gammaproteobacteria</taxon>
        <taxon>Enterobacterales</taxon>
        <taxon>Enterobacteriaceae</taxon>
        <taxon>Klebsiella/Raoultella group</taxon>
        <taxon>Klebsiella</taxon>
        <taxon>Klebsiella pneumoniae complex</taxon>
    </lineage>
</organism>
<comment type="function">
    <text evidence="1">Involved in protein export. Acts as a chaperone by maintaining the newly synthesized protein in an open conformation. Functions as a peptidyl-prolyl cis-trans isomerase.</text>
</comment>
<comment type="catalytic activity">
    <reaction evidence="1">
        <text>[protein]-peptidylproline (omega=180) = [protein]-peptidylproline (omega=0)</text>
        <dbReference type="Rhea" id="RHEA:16237"/>
        <dbReference type="Rhea" id="RHEA-COMP:10747"/>
        <dbReference type="Rhea" id="RHEA-COMP:10748"/>
        <dbReference type="ChEBI" id="CHEBI:83833"/>
        <dbReference type="ChEBI" id="CHEBI:83834"/>
        <dbReference type="EC" id="5.2.1.8"/>
    </reaction>
</comment>
<comment type="subcellular location">
    <subcellularLocation>
        <location>Cytoplasm</location>
    </subcellularLocation>
    <text evidence="1">About half TF is bound to the ribosome near the polypeptide exit tunnel while the other half is free in the cytoplasm.</text>
</comment>
<comment type="domain">
    <text evidence="1">Consists of 3 domains; the N-terminus binds the ribosome, the middle domain has PPIase activity, while the C-terminus has intrinsic chaperone activity on its own.</text>
</comment>
<comment type="similarity">
    <text evidence="1">Belongs to the FKBP-type PPIase family. Tig subfamily.</text>
</comment>
<name>TIG_KLEP3</name>
<keyword id="KW-0131">Cell cycle</keyword>
<keyword id="KW-0132">Cell division</keyword>
<keyword id="KW-0143">Chaperone</keyword>
<keyword id="KW-0963">Cytoplasm</keyword>
<keyword id="KW-0413">Isomerase</keyword>
<keyword id="KW-0697">Rotamase</keyword>
<feature type="chain" id="PRO_1000115544" description="Trigger factor">
    <location>
        <begin position="1"/>
        <end position="432"/>
    </location>
</feature>
<feature type="domain" description="PPIase FKBP-type" evidence="1">
    <location>
        <begin position="161"/>
        <end position="246"/>
    </location>
</feature>
<sequence>MQVSVETTQGLGRRVTITIAADSIENAVKSELVNVAKKVRIDGFRKGKVPMNVVAQRYGASVRQDVLGDLMSRHFVDAIIKEKINPAGAPNYVPGEYKLGEDFTYAVEFEVYPEVELQGLDAIEVEKPVVEVTDADVDTMLETLRKQQATWKDKDGAVDAEDRVTIDFTGSVDGEEFEGGKASDFVLAMGQGRMIPGFEDGIKGHKAGEEFTIDVTFPEEYHAENLKGKAAKFVINLKKVEERELPELTEEFIKRFGVEDGSVAGLRAEVRKNMERELKGAVRNRVKSQAIEGLVKANEIDVPAALIDSEIDVLRRQAAQRFGGNEKQALELPRELFEEQAKRRVVVGLLLGEVIRTNELKADEERVKGLIEEMASAYEDPSEVVEFYSKNKELMDNMRNVALEEQAVEAVLAKAKVSEKATSFNELMNQQA</sequence>